<proteinExistence type="evidence at protein level"/>
<accession>Q61387</accession>
<name>CO72L_MOUSE</name>
<dbReference type="EMBL" id="AC164634">
    <property type="status" value="NOT_ANNOTATED_CDS"/>
    <property type="molecule type" value="Genomic_DNA"/>
</dbReference>
<dbReference type="EMBL" id="X80899">
    <property type="protein sequence ID" value="CAA56861.1"/>
    <property type="molecule type" value="mRNA"/>
</dbReference>
<dbReference type="CCDS" id="CCDS28995.1"/>
<dbReference type="RefSeq" id="NP_033213.1">
    <property type="nucleotide sequence ID" value="NM_009187.3"/>
</dbReference>
<dbReference type="SMR" id="Q61387"/>
<dbReference type="BioGRID" id="203253">
    <property type="interactions" value="2"/>
</dbReference>
<dbReference type="FunCoup" id="Q61387">
    <property type="interactions" value="1877"/>
</dbReference>
<dbReference type="IntAct" id="Q61387">
    <property type="interactions" value="2"/>
</dbReference>
<dbReference type="STRING" id="10090.ENSMUSP00000131584"/>
<dbReference type="iPTMnet" id="Q61387"/>
<dbReference type="PhosphoSitePlus" id="Q61387"/>
<dbReference type="jPOST" id="Q61387"/>
<dbReference type="ProteomicsDB" id="283797"/>
<dbReference type="Pumba" id="Q61387"/>
<dbReference type="Antibodypedia" id="29742">
    <property type="antibodies" value="155 antibodies from 28 providers"/>
</dbReference>
<dbReference type="DNASU" id="20463"/>
<dbReference type="Ensembl" id="ENSMUST00000025095.9">
    <property type="protein sequence ID" value="ENSMUSP00000025095.8"/>
    <property type="gene ID" value="ENSMUSG00000024248.15"/>
</dbReference>
<dbReference type="GeneID" id="20463"/>
<dbReference type="KEGG" id="mmu:20463"/>
<dbReference type="UCSC" id="uc008dsc.2">
    <property type="organism name" value="mouse"/>
</dbReference>
<dbReference type="AGR" id="MGI:106015"/>
<dbReference type="CTD" id="9167"/>
<dbReference type="MGI" id="MGI:106015">
    <property type="gene designation" value="Cox7a2l"/>
</dbReference>
<dbReference type="VEuPathDB" id="HostDB:ENSMUSG00000024248"/>
<dbReference type="GeneTree" id="ENSGT00940000154815"/>
<dbReference type="InParanoid" id="Q61387"/>
<dbReference type="OMA" id="KFNGITQ"/>
<dbReference type="OrthoDB" id="5966508at2759"/>
<dbReference type="PhylomeDB" id="Q61387"/>
<dbReference type="Reactome" id="R-MMU-5628897">
    <property type="pathway name" value="TP53 Regulates Metabolic Genes"/>
</dbReference>
<dbReference type="Reactome" id="R-MMU-611105">
    <property type="pathway name" value="Respiratory electron transport"/>
</dbReference>
<dbReference type="Reactome" id="R-MMU-9707564">
    <property type="pathway name" value="Cytoprotection by HMOX1"/>
</dbReference>
<dbReference type="Reactome" id="R-MMU-9864848">
    <property type="pathway name" value="Complex IV assembly"/>
</dbReference>
<dbReference type="BioGRID-ORCS" id="20463">
    <property type="hits" value="1 hit in 75 CRISPR screens"/>
</dbReference>
<dbReference type="CD-CODE" id="CE726F99">
    <property type="entry name" value="Postsynaptic density"/>
</dbReference>
<dbReference type="ChiTaRS" id="Cox7a2l">
    <property type="organism name" value="mouse"/>
</dbReference>
<dbReference type="PRO" id="PR:Q61387"/>
<dbReference type="Proteomes" id="UP000000589">
    <property type="component" value="Chromosome 17"/>
</dbReference>
<dbReference type="RNAct" id="Q61387">
    <property type="molecule type" value="protein"/>
</dbReference>
<dbReference type="Bgee" id="ENSMUSG00000024248">
    <property type="expression patterns" value="Expressed in spleen and 87 other cell types or tissues"/>
</dbReference>
<dbReference type="ExpressionAtlas" id="Q61387">
    <property type="expression patterns" value="baseline and differential"/>
</dbReference>
<dbReference type="GO" id="GO:0005743">
    <property type="term" value="C:mitochondrial inner membrane"/>
    <property type="evidence" value="ECO:0007669"/>
    <property type="project" value="UniProtKB-SubCell"/>
</dbReference>
<dbReference type="GO" id="GO:0005739">
    <property type="term" value="C:mitochondrion"/>
    <property type="evidence" value="ECO:0007005"/>
    <property type="project" value="MGI"/>
</dbReference>
<dbReference type="GO" id="GO:0005730">
    <property type="term" value="C:nucleolus"/>
    <property type="evidence" value="ECO:0007669"/>
    <property type="project" value="Ensembl"/>
</dbReference>
<dbReference type="GO" id="GO:0045277">
    <property type="term" value="C:respiratory chain complex IV"/>
    <property type="evidence" value="ECO:0007669"/>
    <property type="project" value="InterPro"/>
</dbReference>
<dbReference type="GO" id="GO:0006123">
    <property type="term" value="P:mitochondrial electron transport, cytochrome c to oxygen"/>
    <property type="evidence" value="ECO:0007669"/>
    <property type="project" value="InterPro"/>
</dbReference>
<dbReference type="CDD" id="cd00928">
    <property type="entry name" value="Cyt_c_Oxidase_VIIa"/>
    <property type="match status" value="1"/>
</dbReference>
<dbReference type="FunFam" id="4.10.91.10:FF:000001">
    <property type="entry name" value="Cytochrome c oxidase subunit 7A1, mitochondrial"/>
    <property type="match status" value="1"/>
</dbReference>
<dbReference type="Gene3D" id="4.10.91.10">
    <property type="entry name" value="Cytochrome c oxidase, subunit VIIa"/>
    <property type="match status" value="1"/>
</dbReference>
<dbReference type="InterPro" id="IPR039297">
    <property type="entry name" value="COX7a"/>
</dbReference>
<dbReference type="InterPro" id="IPR017267">
    <property type="entry name" value="Cyt_c_oxidase_su7a-rel_mt"/>
</dbReference>
<dbReference type="InterPro" id="IPR036539">
    <property type="entry name" value="Cyt_c_oxidase_su7a_sf"/>
</dbReference>
<dbReference type="InterPro" id="IPR003177">
    <property type="entry name" value="Cytc_oxidase_su7a_met"/>
</dbReference>
<dbReference type="PANTHER" id="PTHR10510">
    <property type="entry name" value="CYTOCHROME C OXIDASE POLYPEPTIDE 7A"/>
    <property type="match status" value="1"/>
</dbReference>
<dbReference type="PANTHER" id="PTHR10510:SF2">
    <property type="entry name" value="CYTOCHROME C OXIDASE SUBUNIT 7A-RELATED PROTEIN, MITOCHONDRIAL"/>
    <property type="match status" value="1"/>
</dbReference>
<dbReference type="Pfam" id="PF02238">
    <property type="entry name" value="COX7a"/>
    <property type="match status" value="1"/>
</dbReference>
<dbReference type="PIRSF" id="PIRSF037710">
    <property type="entry name" value="COX7A-rel_mt"/>
    <property type="match status" value="1"/>
</dbReference>
<dbReference type="SUPFAM" id="SSF81419">
    <property type="entry name" value="Mitochondrial cytochrome c oxidase subunit VIIa"/>
    <property type="match status" value="1"/>
</dbReference>
<reference key="1">
    <citation type="journal article" date="1995" name="J. Immunol.">
        <title>Isolation of nine gene sequences induced by silica in murine macrophages.</title>
        <authorList>
            <person name="Segade F."/>
            <person name="Claudio E."/>
            <person name="Wrobel K."/>
            <person name="Ramos S."/>
            <person name="Lazo P.S."/>
        </authorList>
    </citation>
    <scope>NUCLEOTIDE SEQUENCE [MRNA]</scope>
    <scope>INDUCTION</scope>
    <source>
        <tissue>Macrophage</tissue>
    </source>
</reference>
<reference key="2">
    <citation type="journal article" date="2009" name="PLoS Biol.">
        <title>Lineage-specific biology revealed by a finished genome assembly of the mouse.</title>
        <authorList>
            <person name="Church D.M."/>
            <person name="Goodstadt L."/>
            <person name="Hillier L.W."/>
            <person name="Zody M.C."/>
            <person name="Goldstein S."/>
            <person name="She X."/>
            <person name="Bult C.J."/>
            <person name="Agarwala R."/>
            <person name="Cherry J.L."/>
            <person name="DiCuccio M."/>
            <person name="Hlavina W."/>
            <person name="Kapustin Y."/>
            <person name="Meric P."/>
            <person name="Maglott D."/>
            <person name="Birtle Z."/>
            <person name="Marques A.C."/>
            <person name="Graves T."/>
            <person name="Zhou S."/>
            <person name="Teague B."/>
            <person name="Potamousis K."/>
            <person name="Churas C."/>
            <person name="Place M."/>
            <person name="Herschleb J."/>
            <person name="Runnheim R."/>
            <person name="Forrest D."/>
            <person name="Amos-Landgraf J."/>
            <person name="Schwartz D.C."/>
            <person name="Cheng Z."/>
            <person name="Lindblad-Toh K."/>
            <person name="Eichler E.E."/>
            <person name="Ponting C.P."/>
        </authorList>
    </citation>
    <scope>NUCLEOTIDE SEQUENCE [LARGE SCALE GENOMIC DNA]</scope>
    <source>
        <strain>C57BL/6J</strain>
    </source>
</reference>
<reference key="3">
    <citation type="journal article" date="2010" name="Cell">
        <title>A tissue-specific atlas of mouse protein phosphorylation and expression.</title>
        <authorList>
            <person name="Huttlin E.L."/>
            <person name="Jedrychowski M.P."/>
            <person name="Elias J.E."/>
            <person name="Goswami T."/>
            <person name="Rad R."/>
            <person name="Beausoleil S.A."/>
            <person name="Villen J."/>
            <person name="Haas W."/>
            <person name="Sowa M.E."/>
            <person name="Gygi S.P."/>
        </authorList>
    </citation>
    <scope>IDENTIFICATION BY MASS SPECTROMETRY [LARGE SCALE ANALYSIS]</scope>
    <source>
        <tissue>Brain</tissue>
        <tissue>Brown adipose tissue</tissue>
        <tissue>Heart</tissue>
        <tissue>Kidney</tissue>
        <tissue>Liver</tissue>
        <tissue>Lung</tissue>
        <tissue>Pancreas</tissue>
        <tissue>Spleen</tissue>
        <tissue>Testis</tissue>
    </source>
</reference>
<reference key="4">
    <citation type="journal article" date="2013" name="Science">
        <title>Supercomplex assembly determines electron flux in the mitochondrial electron transport chain.</title>
        <authorList>
            <person name="Lapuente-Brun E."/>
            <person name="Moreno-Loshuertos R."/>
            <person name="Acin-Perez R."/>
            <person name="Latorre-Pellicer A."/>
            <person name="Colas C."/>
            <person name="Balsa E."/>
            <person name="Perales-Clemente E."/>
            <person name="Quiros P.M."/>
            <person name="Calvo E."/>
            <person name="Rodriguez-Hernandez M.A."/>
            <person name="Navas P."/>
            <person name="Cruz R."/>
            <person name="Carracedo A."/>
            <person name="Lopez-Otin C."/>
            <person name="Perez-Martos A."/>
            <person name="Fernandez-Silva P."/>
            <person name="Fernandez-Vizarra E."/>
            <person name="Enriquez J.A."/>
        </authorList>
    </citation>
    <scope>FUNCTION</scope>
    <scope>POLYMORPHISM</scope>
</reference>
<reference key="5">
    <citation type="journal article" date="2016" name="Nature">
        <title>Mechanism of super-assembly of respiratory complexes III and IV.</title>
        <authorList>
            <person name="Cogliati S."/>
            <person name="Calvo E."/>
            <person name="Loureiro M."/>
            <person name="Guaras A.M."/>
            <person name="Nieto-Arellano R."/>
            <person name="Garcia-Poyatos C."/>
            <person name="Ezkurdia I."/>
            <person name="Mercader N."/>
            <person name="Vazquez J."/>
            <person name="Enriquez J.A."/>
        </authorList>
    </citation>
    <scope>POLYMORPHISM</scope>
</reference>
<reference key="6">
    <citation type="journal article" date="2019" name="Mol. Cell">
        <title>ER and nutrient stress promote assembly of respiratory chain supercomplexes through the PERK-eIF2alpha axis.</title>
        <authorList>
            <person name="Balsa E."/>
            <person name="Soustek M.S."/>
            <person name="Thomas A."/>
            <person name="Cogliati S."/>
            <person name="Garcia-Poyatos C."/>
            <person name="Martin-Garcia E."/>
            <person name="Jedrychowski M."/>
            <person name="Gygi S.P."/>
            <person name="Enriquez J.A."/>
            <person name="Puigserver P."/>
        </authorList>
    </citation>
    <scope>INDUCTION</scope>
</reference>
<reference key="7">
    <citation type="journal article" date="2022" name="Nat. Metab.">
        <title>COX7A2L genetic variants determine cardiorespiratory fitness in mice and human.</title>
        <authorList>
            <person name="Benegiamo G."/>
            <person name="Bou Sleiman M."/>
            <person name="Wohlwend M."/>
            <person name="Rodriguez-Lopez S."/>
            <person name="Goeminne L.J.E."/>
            <person name="Laurila P.P."/>
            <person name="Klevjer M."/>
            <person name="Salonen M.K."/>
            <person name="Lahti J."/>
            <person name="Jha P."/>
            <person name="Cogliati S."/>
            <person name="Enriquez J.A."/>
            <person name="Brumpton B.M."/>
            <person name="Bye A."/>
            <person name="Eriksson J.G."/>
            <person name="Auwerx J."/>
        </authorList>
    </citation>
    <scope>POLYMORPHISM</scope>
</reference>
<evidence type="ECO:0000250" key="1">
    <source>
        <dbReference type="UniProtKB" id="O14548"/>
    </source>
</evidence>
<evidence type="ECO:0000250" key="2">
    <source>
        <dbReference type="UniProtKB" id="Q99KD6"/>
    </source>
</evidence>
<evidence type="ECO:0000255" key="3"/>
<evidence type="ECO:0000269" key="4">
    <source>
    </source>
</evidence>
<evidence type="ECO:0000269" key="5">
    <source>
    </source>
</evidence>
<evidence type="ECO:0000269" key="6">
    <source>
    </source>
</evidence>
<evidence type="ECO:0000269" key="7">
    <source>
    </source>
</evidence>
<evidence type="ECO:0000269" key="8">
    <source>
    </source>
</evidence>
<evidence type="ECO:0000303" key="9">
    <source>
    </source>
</evidence>
<evidence type="ECO:0000305" key="10"/>
<evidence type="ECO:0000312" key="11">
    <source>
        <dbReference type="MGI" id="MGI:106015"/>
    </source>
</evidence>
<comment type="function">
    <text evidence="4 5">Non-functional protein (PubMed:23812712, PubMed:27775717). In contrast to the protein found in other strains (AC Q99KD6), cannot induce the assembly of mitochondrial respiratory supercomplexes (PubMed:23812712, PubMed:27775717).</text>
</comment>
<comment type="subcellular location">
    <subcellularLocation>
        <location evidence="2">Mitochondrion inner membrane</location>
        <topology evidence="3">Single-pass membrane protein</topology>
    </subcellularLocation>
</comment>
<comment type="induction">
    <text evidence="6 8">By estrogen and silica (PubMed:7868905). Expression is induced by ATF4 downstream of the EIF2AK3/PERK-mediated unfolded protein response, thereby increasing formation of respiratory chain supercomplexes (PubMed:31023583).</text>
</comment>
<comment type="polymorphism">
    <text evidence="4 5 7">In C57BL/6J strain, Cox7a2l/Scaf1 is mainly non-functional (PubMed:23812712, PubMed:27775717, PubMed:36253618). There are two alleles for Cox7a2l/Scaf1 depending on mouse strains; a 113 amino-acid long protein, which corresponds to a functional protein (AC Q99KD6), and a 111 amino-acid long protein caused by a two-amino acid deletion (this protein) (PubMed:23812712, PubMed:27775717, PubMed:36253618). The inability of the 111 amino-acid protein to mediate the formation of some mitochondrial respiratory supercomplexes is due to the incorrect orientation of His-73, which prevents association with complex IV (CIV) (PubMed:27775717). Only the 113 amino-acid form can induce the mitochondrial respiratory supercomplex assembly by promoting interaction between complex III (CIII) and complex IV (CIV) (PubMed:23812712, PubMed:27775717, PubMed:36253618).</text>
</comment>
<comment type="similarity">
    <text evidence="10">Belongs to the cytochrome c oxidase VIIa family.</text>
</comment>
<feature type="transit peptide" description="Mitochondrion" evidence="3">
    <location>
        <begin position="1"/>
        <end position="54"/>
    </location>
</feature>
<feature type="chain" id="PRO_0000006155" description="Cytochrome c oxidase subunit 7A2-like, mitochondrial">
    <location>
        <begin position="55"/>
        <end position="111"/>
    </location>
</feature>
<feature type="transmembrane region" description="Helical" evidence="2">
    <location>
        <begin position="79"/>
        <end position="104"/>
    </location>
</feature>
<feature type="modified residue" description="N6-acetyllysine" evidence="1">
    <location>
        <position position="68"/>
    </location>
</feature>
<organism>
    <name type="scientific">Mus musculus</name>
    <name type="common">Mouse</name>
    <dbReference type="NCBI Taxonomy" id="10090"/>
    <lineage>
        <taxon>Eukaryota</taxon>
        <taxon>Metazoa</taxon>
        <taxon>Chordata</taxon>
        <taxon>Craniata</taxon>
        <taxon>Vertebrata</taxon>
        <taxon>Euteleostomi</taxon>
        <taxon>Mammalia</taxon>
        <taxon>Eutheria</taxon>
        <taxon>Euarchontoglires</taxon>
        <taxon>Glires</taxon>
        <taxon>Rodentia</taxon>
        <taxon>Myomorpha</taxon>
        <taxon>Muroidea</taxon>
        <taxon>Muridae</taxon>
        <taxon>Murinae</taxon>
        <taxon>Mus</taxon>
        <taxon>Mus</taxon>
    </lineage>
</organism>
<keyword id="KW-0007">Acetylation</keyword>
<keyword id="KW-0472">Membrane</keyword>
<keyword id="KW-0496">Mitochondrion</keyword>
<keyword id="KW-0999">Mitochondrion inner membrane</keyword>
<keyword id="KW-1185">Reference proteome</keyword>
<keyword id="KW-0809">Transit peptide</keyword>
<keyword id="KW-0812">Transmembrane</keyword>
<keyword id="KW-1133">Transmembrane helix</keyword>
<gene>
    <name evidence="11" type="primary">Cox7a2l</name>
    <name type="synonym">Cox7rp</name>
    <name evidence="9" type="synonym">Scaf1</name>
    <name evidence="9" type="synonym">Silg81</name>
</gene>
<sequence length="111" mass="12399">MYYKFSSFTQKLAGAWASEAYTPQGLKPVSTEAPPIIFATPTKLTSSVTAYDYSGKNKVPELQKFFQKADGFHLKRGLPDQMLYRTTMALTLGGTIYCLIALYMASQPRNK</sequence>
<protein>
    <recommendedName>
        <fullName evidence="10">Cytochrome c oxidase subunit 7A2-like, mitochondrial</fullName>
    </recommendedName>
    <alternativeName>
        <fullName evidence="10">Cytochrome c oxidase subunit 7A-related protein</fullName>
    </alternativeName>
    <alternativeName>
        <fullName evidence="9">Supercomplex assembly factor 1</fullName>
    </alternativeName>
</protein>